<gene>
    <name evidence="1" type="primary">pyrH</name>
    <name type="ordered locus">Pisl_0530</name>
</gene>
<feature type="chain" id="PRO_1000053992" description="Uridylate kinase">
    <location>
        <begin position="1"/>
        <end position="217"/>
    </location>
</feature>
<feature type="binding site" evidence="1">
    <location>
        <begin position="6"/>
        <end position="10"/>
    </location>
    <ligand>
        <name>ATP</name>
        <dbReference type="ChEBI" id="CHEBI:30616"/>
    </ligand>
</feature>
<feature type="binding site" evidence="1">
    <location>
        <position position="38"/>
    </location>
    <ligand>
        <name>UMP</name>
        <dbReference type="ChEBI" id="CHEBI:57865"/>
    </ligand>
</feature>
<feature type="binding site" evidence="1">
    <location>
        <position position="39"/>
    </location>
    <ligand>
        <name>ATP</name>
        <dbReference type="ChEBI" id="CHEBI:30616"/>
    </ligand>
</feature>
<feature type="binding site" evidence="1">
    <location>
        <position position="43"/>
    </location>
    <ligand>
        <name>ATP</name>
        <dbReference type="ChEBI" id="CHEBI:30616"/>
    </ligand>
</feature>
<feature type="binding site" evidence="1">
    <location>
        <position position="60"/>
    </location>
    <ligand>
        <name>UMP</name>
        <dbReference type="ChEBI" id="CHEBI:57865"/>
    </ligand>
</feature>
<feature type="binding site" evidence="1">
    <location>
        <begin position="107"/>
        <end position="113"/>
    </location>
    <ligand>
        <name>UMP</name>
        <dbReference type="ChEBI" id="CHEBI:57865"/>
    </ligand>
</feature>
<feature type="binding site" evidence="1">
    <location>
        <position position="134"/>
    </location>
    <ligand>
        <name>ATP</name>
        <dbReference type="ChEBI" id="CHEBI:30616"/>
    </ligand>
</feature>
<feature type="binding site" evidence="1">
    <location>
        <position position="139"/>
    </location>
    <ligand>
        <name>ATP</name>
        <dbReference type="ChEBI" id="CHEBI:30616"/>
    </ligand>
</feature>
<feature type="binding site" evidence="1">
    <location>
        <position position="142"/>
    </location>
    <ligand>
        <name>ATP</name>
        <dbReference type="ChEBI" id="CHEBI:30616"/>
    </ligand>
</feature>
<protein>
    <recommendedName>
        <fullName evidence="1">Uridylate kinase</fullName>
        <shortName evidence="1">UK</shortName>
        <ecNumber evidence="1">2.7.4.22</ecNumber>
    </recommendedName>
    <alternativeName>
        <fullName evidence="1">Uridine monophosphate kinase</fullName>
        <shortName evidence="1">UMP kinase</shortName>
        <shortName evidence="1">UMPK</shortName>
    </alternativeName>
</protein>
<sequence>MTLVIKLSGRVFEDEELIFKYARVIKAYSGKVGVVTGGGEIARRYISIAKRGGASYTFQDLLGIYASRLNALLFISLLEDACPIVPTNIEEFLDAWRRCRITVTGGFQPGQSTATVAALVAEAVKAPVLLNAANIDAVYSEDPKINPNAKRLPVLTYDEFERILKSSVLPGGYELMDTWSISILKRNCITTYIFDGRKPEHIEAVMRGENPGSKITC</sequence>
<accession>A1RRX6</accession>
<dbReference type="EC" id="2.7.4.22" evidence="1"/>
<dbReference type="EMBL" id="CP000504">
    <property type="protein sequence ID" value="ABL87708.1"/>
    <property type="molecule type" value="Genomic_DNA"/>
</dbReference>
<dbReference type="RefSeq" id="WP_011762285.1">
    <property type="nucleotide sequence ID" value="NC_008701.1"/>
</dbReference>
<dbReference type="SMR" id="A1RRX6"/>
<dbReference type="STRING" id="384616.Pisl_0530"/>
<dbReference type="GeneID" id="4618060"/>
<dbReference type="KEGG" id="pis:Pisl_0530"/>
<dbReference type="eggNOG" id="arCOG00858">
    <property type="taxonomic scope" value="Archaea"/>
</dbReference>
<dbReference type="HOGENOM" id="CLU_079546_0_0_2"/>
<dbReference type="OrthoDB" id="372251at2157"/>
<dbReference type="UniPathway" id="UPA00159">
    <property type="reaction ID" value="UER00275"/>
</dbReference>
<dbReference type="Proteomes" id="UP000002595">
    <property type="component" value="Chromosome"/>
</dbReference>
<dbReference type="GO" id="GO:0005737">
    <property type="term" value="C:cytoplasm"/>
    <property type="evidence" value="ECO:0007669"/>
    <property type="project" value="UniProtKB-SubCell"/>
</dbReference>
<dbReference type="GO" id="GO:0005524">
    <property type="term" value="F:ATP binding"/>
    <property type="evidence" value="ECO:0007669"/>
    <property type="project" value="UniProtKB-KW"/>
</dbReference>
<dbReference type="GO" id="GO:0033862">
    <property type="term" value="F:UMP kinase activity"/>
    <property type="evidence" value="ECO:0007669"/>
    <property type="project" value="UniProtKB-EC"/>
</dbReference>
<dbReference type="GO" id="GO:0044210">
    <property type="term" value="P:'de novo' CTP biosynthetic process"/>
    <property type="evidence" value="ECO:0007669"/>
    <property type="project" value="UniProtKB-UniRule"/>
</dbReference>
<dbReference type="GO" id="GO:0006225">
    <property type="term" value="P:UDP biosynthetic process"/>
    <property type="evidence" value="ECO:0007669"/>
    <property type="project" value="TreeGrafter"/>
</dbReference>
<dbReference type="Gene3D" id="3.40.1160.10">
    <property type="entry name" value="Acetylglutamate kinase-like"/>
    <property type="match status" value="1"/>
</dbReference>
<dbReference type="HAMAP" id="MF_01220_A">
    <property type="entry name" value="PyrH_A"/>
    <property type="match status" value="1"/>
</dbReference>
<dbReference type="InterPro" id="IPR036393">
    <property type="entry name" value="AceGlu_kinase-like_sf"/>
</dbReference>
<dbReference type="InterPro" id="IPR001048">
    <property type="entry name" value="Asp/Glu/Uridylate_kinase"/>
</dbReference>
<dbReference type="InterPro" id="IPR011817">
    <property type="entry name" value="Uridylate_kinase"/>
</dbReference>
<dbReference type="InterPro" id="IPR011818">
    <property type="entry name" value="Uridylate_kinase_arch/spir"/>
</dbReference>
<dbReference type="NCBIfam" id="TIGR02076">
    <property type="entry name" value="pyrH_arch"/>
    <property type="match status" value="1"/>
</dbReference>
<dbReference type="PANTHER" id="PTHR42833">
    <property type="entry name" value="URIDYLATE KINASE"/>
    <property type="match status" value="1"/>
</dbReference>
<dbReference type="PANTHER" id="PTHR42833:SF4">
    <property type="entry name" value="URIDYLATE KINASE PUMPKIN, CHLOROPLASTIC"/>
    <property type="match status" value="1"/>
</dbReference>
<dbReference type="Pfam" id="PF00696">
    <property type="entry name" value="AA_kinase"/>
    <property type="match status" value="1"/>
</dbReference>
<dbReference type="PIRSF" id="PIRSF005650">
    <property type="entry name" value="Uridylate_kin"/>
    <property type="match status" value="1"/>
</dbReference>
<dbReference type="SUPFAM" id="SSF53633">
    <property type="entry name" value="Carbamate kinase-like"/>
    <property type="match status" value="1"/>
</dbReference>
<name>PYRH_PYRIL</name>
<reference key="1">
    <citation type="submission" date="2006-12" db="EMBL/GenBank/DDBJ databases">
        <title>Complete sequence of Pyrobaculum islandicum DSM 4184.</title>
        <authorList>
            <person name="Copeland A."/>
            <person name="Lucas S."/>
            <person name="Lapidus A."/>
            <person name="Barry K."/>
            <person name="Detter J.C."/>
            <person name="Glavina del Rio T."/>
            <person name="Dalin E."/>
            <person name="Tice H."/>
            <person name="Pitluck S."/>
            <person name="Meincke L."/>
            <person name="Brettin T."/>
            <person name="Bruce D."/>
            <person name="Han C."/>
            <person name="Tapia R."/>
            <person name="Gilna P."/>
            <person name="Schmutz J."/>
            <person name="Larimer F."/>
            <person name="Land M."/>
            <person name="Hauser L."/>
            <person name="Kyrpides N."/>
            <person name="Mikhailova N."/>
            <person name="Cozen A.E."/>
            <person name="Fitz-Gibbon S.T."/>
            <person name="House C.H."/>
            <person name="Saltikov C."/>
            <person name="Lowe T."/>
            <person name="Richardson P."/>
        </authorList>
    </citation>
    <scope>NUCLEOTIDE SEQUENCE [LARGE SCALE GENOMIC DNA]</scope>
    <source>
        <strain>DSM 4184 / JCM 9189 / GEO3</strain>
    </source>
</reference>
<evidence type="ECO:0000255" key="1">
    <source>
        <dbReference type="HAMAP-Rule" id="MF_01220"/>
    </source>
</evidence>
<comment type="function">
    <text evidence="1">Catalyzes the reversible phosphorylation of UMP to UDP.</text>
</comment>
<comment type="catalytic activity">
    <reaction evidence="1">
        <text>UMP + ATP = UDP + ADP</text>
        <dbReference type="Rhea" id="RHEA:24400"/>
        <dbReference type="ChEBI" id="CHEBI:30616"/>
        <dbReference type="ChEBI" id="CHEBI:57865"/>
        <dbReference type="ChEBI" id="CHEBI:58223"/>
        <dbReference type="ChEBI" id="CHEBI:456216"/>
        <dbReference type="EC" id="2.7.4.22"/>
    </reaction>
</comment>
<comment type="activity regulation">
    <text evidence="1">Inhibited by UTP.</text>
</comment>
<comment type="pathway">
    <text evidence="1">Pyrimidine metabolism; CTP biosynthesis via de novo pathway; UDP from UMP (UMPK route): step 1/1.</text>
</comment>
<comment type="subunit">
    <text evidence="1">Homohexamer.</text>
</comment>
<comment type="subcellular location">
    <subcellularLocation>
        <location evidence="1">Cytoplasm</location>
    </subcellularLocation>
</comment>
<comment type="similarity">
    <text evidence="1">Belongs to the UMP kinase family.</text>
</comment>
<organism>
    <name type="scientific">Pyrobaculum islandicum (strain DSM 4184 / JCM 9189 / GEO3)</name>
    <dbReference type="NCBI Taxonomy" id="384616"/>
    <lineage>
        <taxon>Archaea</taxon>
        <taxon>Thermoproteota</taxon>
        <taxon>Thermoprotei</taxon>
        <taxon>Thermoproteales</taxon>
        <taxon>Thermoproteaceae</taxon>
        <taxon>Pyrobaculum</taxon>
    </lineage>
</organism>
<proteinExistence type="inferred from homology"/>
<keyword id="KW-0067">ATP-binding</keyword>
<keyword id="KW-0963">Cytoplasm</keyword>
<keyword id="KW-0418">Kinase</keyword>
<keyword id="KW-0547">Nucleotide-binding</keyword>
<keyword id="KW-0665">Pyrimidine biosynthesis</keyword>
<keyword id="KW-0808">Transferase</keyword>